<sequence length="156" mass="17417">MASRVLSAYVSRLPAAFAPLPRVRMLAVARPLSTALCSAGTQTRLGTLQPALVLAQVPGRVTQLCRQYSDMPPLTLEGIQDRVLYVLKLYDKIDPEKLSVNSHFMKDLGLDSLDQVEIIMAMEDEFGFEIPDIDAEKLMCPQEIVDYIADKKDVYE</sequence>
<keyword id="KW-0007">Acetylation</keyword>
<keyword id="KW-0249">Electron transport</keyword>
<keyword id="KW-0275">Fatty acid biosynthesis</keyword>
<keyword id="KW-0276">Fatty acid metabolism</keyword>
<keyword id="KW-0444">Lipid biosynthesis</keyword>
<keyword id="KW-0443">Lipid metabolism</keyword>
<keyword id="KW-0496">Mitochondrion</keyword>
<keyword id="KW-0596">Phosphopantetheine</keyword>
<keyword id="KW-0597">Phosphoprotein</keyword>
<keyword id="KW-1185">Reference proteome</keyword>
<keyword id="KW-0679">Respiratory chain</keyword>
<keyword id="KW-0809">Transit peptide</keyword>
<keyword id="KW-0813">Transport</keyword>
<evidence type="ECO:0000250" key="1"/>
<evidence type="ECO:0000250" key="2">
    <source>
        <dbReference type="UniProtKB" id="O14561"/>
    </source>
</evidence>
<evidence type="ECO:0000250" key="3">
    <source>
        <dbReference type="UniProtKB" id="P52505"/>
    </source>
</evidence>
<evidence type="ECO:0000250" key="4">
    <source>
        <dbReference type="UniProtKB" id="Q9CR21"/>
    </source>
</evidence>
<evidence type="ECO:0000250" key="5">
    <source>
        <dbReference type="UniProtKB" id="Q9H1K1"/>
    </source>
</evidence>
<evidence type="ECO:0000255" key="6">
    <source>
        <dbReference type="PROSITE-ProRule" id="PRU00258"/>
    </source>
</evidence>
<evidence type="ECO:0000305" key="7"/>
<protein>
    <recommendedName>
        <fullName evidence="2">Acyl carrier protein, mitochondrial</fullName>
        <shortName>ACP</shortName>
    </recommendedName>
    <alternativeName>
        <fullName>NADH-ubiquinone oxidoreductase 9.6 kDa subunit</fullName>
    </alternativeName>
</protein>
<dbReference type="EMBL" id="DQ885712">
    <property type="protein sequence ID" value="ABH12221.1"/>
    <property type="molecule type" value="mRNA"/>
</dbReference>
<dbReference type="RefSeq" id="XP_018867449.1">
    <property type="nucleotide sequence ID" value="XM_019011904.3"/>
</dbReference>
<dbReference type="SMR" id="Q0MQC2"/>
<dbReference type="FunCoup" id="Q0MQC2">
    <property type="interactions" value="2459"/>
</dbReference>
<dbReference type="STRING" id="9593.ENSGGOP00000006175"/>
<dbReference type="Ensembl" id="ENSGGOT00000006341.3">
    <property type="protein sequence ID" value="ENSGGOP00000006175.3"/>
    <property type="gene ID" value="ENSGGOG00000006320.3"/>
</dbReference>
<dbReference type="GeneID" id="101140479"/>
<dbReference type="KEGG" id="ggo:101140479"/>
<dbReference type="CTD" id="4706"/>
<dbReference type="GeneTree" id="ENSGT00390000002127"/>
<dbReference type="InParanoid" id="Q0MQC2"/>
<dbReference type="OMA" id="QYCEAPP"/>
<dbReference type="OrthoDB" id="5372at9604"/>
<dbReference type="Proteomes" id="UP000001519">
    <property type="component" value="Chromosome 16"/>
</dbReference>
<dbReference type="Bgee" id="ENSGGOG00000006320">
    <property type="expression patterns" value="Expressed in heart and 6 other cell types or tissues"/>
</dbReference>
<dbReference type="GO" id="GO:0099128">
    <property type="term" value="C:mitochondrial [2Fe-2S] assembly complex"/>
    <property type="evidence" value="ECO:0007669"/>
    <property type="project" value="Ensembl"/>
</dbReference>
<dbReference type="GO" id="GO:0005743">
    <property type="term" value="C:mitochondrial inner membrane"/>
    <property type="evidence" value="ECO:0007669"/>
    <property type="project" value="Ensembl"/>
</dbReference>
<dbReference type="GO" id="GO:0005739">
    <property type="term" value="C:mitochondrion"/>
    <property type="evidence" value="ECO:0000318"/>
    <property type="project" value="GO_Central"/>
</dbReference>
<dbReference type="GO" id="GO:0005654">
    <property type="term" value="C:nucleoplasm"/>
    <property type="evidence" value="ECO:0007669"/>
    <property type="project" value="Ensembl"/>
</dbReference>
<dbReference type="GO" id="GO:0045271">
    <property type="term" value="C:respiratory chain complex I"/>
    <property type="evidence" value="ECO:0000250"/>
    <property type="project" value="UniProtKB"/>
</dbReference>
<dbReference type="GO" id="GO:0000035">
    <property type="term" value="F:acyl binding"/>
    <property type="evidence" value="ECO:0000318"/>
    <property type="project" value="GO_Central"/>
</dbReference>
<dbReference type="GO" id="GO:0000036">
    <property type="term" value="F:acyl carrier activity"/>
    <property type="evidence" value="ECO:0000318"/>
    <property type="project" value="GO_Central"/>
</dbReference>
<dbReference type="GO" id="GO:0140978">
    <property type="term" value="F:mitochondrial large ribosomal subunit binding"/>
    <property type="evidence" value="ECO:0000250"/>
    <property type="project" value="UniProtKB"/>
</dbReference>
<dbReference type="GO" id="GO:0005198">
    <property type="term" value="F:structural molecule activity"/>
    <property type="evidence" value="ECO:0007669"/>
    <property type="project" value="Ensembl"/>
</dbReference>
<dbReference type="GO" id="GO:0044571">
    <property type="term" value="P:[2Fe-2S] cluster assembly"/>
    <property type="evidence" value="ECO:0000250"/>
    <property type="project" value="UniProtKB"/>
</dbReference>
<dbReference type="FunFam" id="1.10.1200.10:FF:000008">
    <property type="entry name" value="Acyl carrier protein"/>
    <property type="match status" value="1"/>
</dbReference>
<dbReference type="Gene3D" id="1.10.1200.10">
    <property type="entry name" value="ACP-like"/>
    <property type="match status" value="1"/>
</dbReference>
<dbReference type="HAMAP" id="MF_01217">
    <property type="entry name" value="Acyl_carrier"/>
    <property type="match status" value="1"/>
</dbReference>
<dbReference type="InterPro" id="IPR003231">
    <property type="entry name" value="ACP"/>
</dbReference>
<dbReference type="InterPro" id="IPR036736">
    <property type="entry name" value="ACP-like_sf"/>
</dbReference>
<dbReference type="InterPro" id="IPR009081">
    <property type="entry name" value="PP-bd_ACP"/>
</dbReference>
<dbReference type="InterPro" id="IPR006162">
    <property type="entry name" value="Ppantetheine_attach_site"/>
</dbReference>
<dbReference type="NCBIfam" id="TIGR00517">
    <property type="entry name" value="acyl_carrier"/>
    <property type="match status" value="1"/>
</dbReference>
<dbReference type="NCBIfam" id="NF002148">
    <property type="entry name" value="PRK00982.1-2"/>
    <property type="match status" value="1"/>
</dbReference>
<dbReference type="PANTHER" id="PTHR20863">
    <property type="entry name" value="ACYL CARRIER PROTEIN"/>
    <property type="match status" value="1"/>
</dbReference>
<dbReference type="PANTHER" id="PTHR20863:SF28">
    <property type="entry name" value="ACYL CARRIER PROTEIN, MITOCHONDRIAL"/>
    <property type="match status" value="1"/>
</dbReference>
<dbReference type="Pfam" id="PF00550">
    <property type="entry name" value="PP-binding"/>
    <property type="match status" value="1"/>
</dbReference>
<dbReference type="SUPFAM" id="SSF47336">
    <property type="entry name" value="ACP-like"/>
    <property type="match status" value="1"/>
</dbReference>
<dbReference type="PROSITE" id="PS50075">
    <property type="entry name" value="CARRIER"/>
    <property type="match status" value="1"/>
</dbReference>
<dbReference type="PROSITE" id="PS00012">
    <property type="entry name" value="PHOSPHOPANTETHEINE"/>
    <property type="match status" value="1"/>
</dbReference>
<proteinExistence type="evidence at transcript level"/>
<accession>Q0MQC2</accession>
<comment type="function">
    <text evidence="2 3 5">Carrier of the growing fatty acid chain in fatty acid biosynthesis (By similarity). Accessory and non-catalytic subunit of the mitochondrial membrane respiratory chain NADH dehydrogenase (Complex I), which functions in the transfer of electrons from NADH to the respiratory chain. Accessory protein, of the core iron-sulfur cluster (ISC) assembly complex, that regulates, in association with LYRM4, the stability and the cysteine desulfurase activity of NFS1 and participates in the [2Fe-2S] clusters assembly on the scaffolding protein ISCU (By similarity). The core iron-sulfur cluster (ISC) assembly complex is involved in the de novo synthesis of a [2Fe-2S] cluster, the first step of the mitochondrial iron-sulfur protein biogenesis. This process is initiated by the cysteine desulfurase complex (NFS1:LYRM4:NDUFAB1) that produces persulfide which is delivered on the scaffold protein ISCU in a FXN-dependent manner. Then this complex is stabilized by FDX2 which provides reducing equivalents to accomplish the [2Fe-2S] cluster assembly. Finally, the [2Fe-2S] cluster is transferred from ISCU to chaperone proteins, including HSCB, HSPA9 and GLRX5 (By similarity).</text>
</comment>
<comment type="subunit">
    <text evidence="2">Mammalian complex I is composed of 45 different subunits. Interacts with ETFRF1. Identified in a complex composed of MALSU1, MIEF1 upstream open reading frame protein and NDUFAB1; within the trimeric complex, MIEF1 upstream open reading frame protein functions as a bridging scaffold that interacts with MALSU1 on one side, and with NDUFAB1 on the other side. The complex interacts with the mitochondrial large ribosomal subunit. Interacts with alpha-1-microglobulin chain; this interaction is required for the maintenance of mitochondrial redox homeostasis. Component of the mitochondrial core iron-sulfur cluster (ISC) complex composed of NFS1, LYRM4, NDUFAB1, ISCU, FXN, and FDX2; this complex is a heterohexamer containing two copies of each monomer. Component of the cyteine desulfurase complex composed of NFS1, LYRM4 and NDUFAB1; this complex contributes to the stability and cysteine desulfurase activity of NFS1.</text>
</comment>
<comment type="subcellular location">
    <subcellularLocation>
        <location evidence="2">Mitochondrion</location>
    </subcellularLocation>
</comment>
<comment type="PTM">
    <text evidence="3">Phosphopantetheinylation at Ser-112 is essential for interactions with LYR motif-containing proteins.</text>
</comment>
<comment type="similarity">
    <text evidence="7">Belongs to the acyl carrier protein (ACP) family.</text>
</comment>
<name>ACPM_GORGO</name>
<reference key="1">
    <citation type="journal article" date="2006" name="Gene">
        <title>Adaptive selection of mitochondrial complex I subunits during primate radiation.</title>
        <authorList>
            <person name="Mishmar D."/>
            <person name="Ruiz-Pesini E."/>
            <person name="Mondragon-Palomino M."/>
            <person name="Procaccio V."/>
            <person name="Gaut B."/>
            <person name="Wallace D.C."/>
        </authorList>
    </citation>
    <scope>NUCLEOTIDE SEQUENCE [MRNA]</scope>
</reference>
<gene>
    <name evidence="2" type="primary">NDUFAB1</name>
</gene>
<feature type="transit peptide" description="Mitochondrion" evidence="1">
    <location>
        <begin position="1"/>
        <end position="68"/>
    </location>
</feature>
<feature type="chain" id="PRO_0000251161" description="Acyl carrier protein, mitochondrial">
    <location>
        <begin position="69"/>
        <end position="156"/>
    </location>
</feature>
<feature type="domain" description="Carrier" evidence="6">
    <location>
        <begin position="77"/>
        <end position="152"/>
    </location>
</feature>
<feature type="modified residue" description="N6-acetyllysine" evidence="4">
    <location>
        <position position="88"/>
    </location>
</feature>
<feature type="modified residue" description="O-(pantetheine 4'-phosphoryl)serine" evidence="6">
    <location>
        <position position="112"/>
    </location>
</feature>
<organism>
    <name type="scientific">Gorilla gorilla gorilla</name>
    <name type="common">Western lowland gorilla</name>
    <dbReference type="NCBI Taxonomy" id="9595"/>
    <lineage>
        <taxon>Eukaryota</taxon>
        <taxon>Metazoa</taxon>
        <taxon>Chordata</taxon>
        <taxon>Craniata</taxon>
        <taxon>Vertebrata</taxon>
        <taxon>Euteleostomi</taxon>
        <taxon>Mammalia</taxon>
        <taxon>Eutheria</taxon>
        <taxon>Euarchontoglires</taxon>
        <taxon>Primates</taxon>
        <taxon>Haplorrhini</taxon>
        <taxon>Catarrhini</taxon>
        <taxon>Hominidae</taxon>
        <taxon>Gorilla</taxon>
    </lineage>
</organism>